<proteinExistence type="evidence at protein level"/>
<evidence type="ECO:0000269" key="1">
    <source ref="1"/>
</evidence>
<evidence type="ECO:0000305" key="2"/>
<protein>
    <recommendedName>
        <fullName>Caerin-4.3</fullName>
    </recommendedName>
</protein>
<accession>P56244</accession>
<dbReference type="GO" id="GO:0005576">
    <property type="term" value="C:extracellular region"/>
    <property type="evidence" value="ECO:0007669"/>
    <property type="project" value="UniProtKB-SubCell"/>
</dbReference>
<dbReference type="GO" id="GO:0042742">
    <property type="term" value="P:defense response to bacterium"/>
    <property type="evidence" value="ECO:0007669"/>
    <property type="project" value="UniProtKB-KW"/>
</dbReference>
<organism>
    <name type="scientific">Ranoidea caerulea</name>
    <name type="common">Green tree frog</name>
    <name type="synonym">Litoria caerulea</name>
    <dbReference type="NCBI Taxonomy" id="30344"/>
    <lineage>
        <taxon>Eukaryota</taxon>
        <taxon>Metazoa</taxon>
        <taxon>Chordata</taxon>
        <taxon>Craniata</taxon>
        <taxon>Vertebrata</taxon>
        <taxon>Euteleostomi</taxon>
        <taxon>Amphibia</taxon>
        <taxon>Batrachia</taxon>
        <taxon>Anura</taxon>
        <taxon>Neobatrachia</taxon>
        <taxon>Hyloidea</taxon>
        <taxon>Hylidae</taxon>
        <taxon>Pelodryadinae</taxon>
        <taxon>Ranoidea</taxon>
    </lineage>
</organism>
<feature type="peptide" id="PRO_0000043754" description="Caerin-4.3">
    <location>
        <begin position="1"/>
        <end position="23"/>
    </location>
</feature>
<sequence length="23" mass="2356">GLWQKIKNAAGDLASGIVEGIKS</sequence>
<keyword id="KW-0878">Amphibian defense peptide</keyword>
<keyword id="KW-0044">Antibiotic</keyword>
<keyword id="KW-0929">Antimicrobial</keyword>
<keyword id="KW-0903">Direct protein sequencing</keyword>
<keyword id="KW-0964">Secreted</keyword>
<name>CR43_RANCA</name>
<reference key="1">
    <citation type="journal article" date="1993" name="J. Chem. Res.">
        <title>Peptides from Australian frogs. The structures of the caerins from Litoria caerula.</title>
        <authorList>
            <person name="Stone D.J.M."/>
            <person name="Waugh R.J."/>
            <person name="Bowie J.H."/>
            <person name="Wallace J.C."/>
            <person name="Tyler M.J."/>
        </authorList>
    </citation>
    <scope>PROTEIN SEQUENCE</scope>
    <scope>MASS SPECTROMETRY</scope>
    <source>
        <tissue>Parotoid gland</tissue>
    </source>
</reference>
<comment type="function">
    <text>Antibacterial peptide, that adopts an alpha helical conformation which can disrupt bacterial membranes. Each caerin displays a different antimicrobial specificity.</text>
</comment>
<comment type="subcellular location">
    <subcellularLocation>
        <location>Secreted</location>
    </subcellularLocation>
</comment>
<comment type="tissue specificity">
    <text>Expressed by the skin parotoid and/or rostral glands.</text>
</comment>
<comment type="mass spectrometry" mass="2353.0" method="FAB" evidence="1"/>
<comment type="similarity">
    <text evidence="2">Belongs to the frog skin active peptide (FSAP) family. Caerin subfamily.</text>
</comment>